<proteinExistence type="inferred from homology"/>
<reference key="1">
    <citation type="journal article" date="2007" name="Proc. Natl. Acad. Sci. U.S.A.">
        <title>The tiny eukaryote Ostreococcus provides genomic insights into the paradox of plankton speciation.</title>
        <authorList>
            <person name="Palenik B."/>
            <person name="Grimwood J."/>
            <person name="Aerts A."/>
            <person name="Rouze P."/>
            <person name="Salamov A."/>
            <person name="Putnam N."/>
            <person name="Dupont C."/>
            <person name="Jorgensen R."/>
            <person name="Derelle E."/>
            <person name="Rombauts S."/>
            <person name="Zhou K."/>
            <person name="Otillar R."/>
            <person name="Merchant S.S."/>
            <person name="Podell S."/>
            <person name="Gaasterland T."/>
            <person name="Napoli C."/>
            <person name="Gendler K."/>
            <person name="Manuell A."/>
            <person name="Tai V."/>
            <person name="Vallon O."/>
            <person name="Piganeau G."/>
            <person name="Jancek S."/>
            <person name="Heijde M."/>
            <person name="Jabbari K."/>
            <person name="Bowler C."/>
            <person name="Lohr M."/>
            <person name="Robbens S."/>
            <person name="Werner G."/>
            <person name="Dubchak I."/>
            <person name="Pazour G.J."/>
            <person name="Ren Q."/>
            <person name="Paulsen I."/>
            <person name="Delwiche C."/>
            <person name="Schmutz J."/>
            <person name="Rokhsar D."/>
            <person name="Van de Peer Y."/>
            <person name="Moreau H."/>
            <person name="Grigoriev I.V."/>
        </authorList>
    </citation>
    <scope>NUCLEOTIDE SEQUENCE [LARGE SCALE GENOMIC DNA]</scope>
    <source>
        <strain>CCE9901</strain>
    </source>
</reference>
<name>MTNA_OSTLU</name>
<evidence type="ECO:0000255" key="1">
    <source>
        <dbReference type="HAMAP-Rule" id="MF_03119"/>
    </source>
</evidence>
<keyword id="KW-0028">Amino-acid biosynthesis</keyword>
<keyword id="KW-0963">Cytoplasm</keyword>
<keyword id="KW-0413">Isomerase</keyword>
<keyword id="KW-0486">Methionine biosynthesis</keyword>
<keyword id="KW-0539">Nucleus</keyword>
<keyword id="KW-1185">Reference proteome</keyword>
<sequence>MSSLEAIRYARGNLELLDQLALPLETKYIDVRDCNACWRCIKDMNVRGAPAIAIAAALALAVELEAKRGTLTTCEAAEAFVRERFDHMYTSRPTAVNLGEAKNRIQALAKRLSESGDVSGMIEGVIEGCEAMHAEDVASCRAIGDKGAAALLRACGAKDGENIKVMTCCNTGSLATAGYGTALGVIRALWESGRLERAYCLETRPYNQGSRLTAYELVYEKIPGTLICDNMAAALMARGDVDAIVVGADRVAANGDFANKIGTYSLAVNAKHHGVPMFTAAPVTTLDPETATGADIHIEERPGEEVTHSLGKRVAAEGIDVWNPSFDVTPAALLTGVITEHGVIEKNASGLFPVADFVAQAKGGT</sequence>
<dbReference type="EC" id="5.3.1.23" evidence="1"/>
<dbReference type="EMBL" id="CP000587">
    <property type="protein sequence ID" value="ABO96983.1"/>
    <property type="molecule type" value="Genomic_DNA"/>
</dbReference>
<dbReference type="RefSeq" id="XP_001418690.1">
    <property type="nucleotide sequence ID" value="XM_001418653.1"/>
</dbReference>
<dbReference type="SMR" id="A4S068"/>
<dbReference type="STRING" id="436017.A4S068"/>
<dbReference type="EnsemblPlants" id="ABO96983">
    <property type="protein sequence ID" value="ABO96983"/>
    <property type="gene ID" value="OSTLU_35743"/>
</dbReference>
<dbReference type="GeneID" id="5002974"/>
<dbReference type="Gramene" id="ABO96983">
    <property type="protein sequence ID" value="ABO96983"/>
    <property type="gene ID" value="OSTLU_35743"/>
</dbReference>
<dbReference type="KEGG" id="olu:OSTLU_35743"/>
<dbReference type="eggNOG" id="KOG1468">
    <property type="taxonomic scope" value="Eukaryota"/>
</dbReference>
<dbReference type="HOGENOM" id="CLU_016218_1_3_1"/>
<dbReference type="OMA" id="CETRPLN"/>
<dbReference type="OrthoDB" id="2461at2759"/>
<dbReference type="UniPathway" id="UPA00904">
    <property type="reaction ID" value="UER00874"/>
</dbReference>
<dbReference type="Proteomes" id="UP000001568">
    <property type="component" value="Chromosome 7"/>
</dbReference>
<dbReference type="GO" id="GO:0005737">
    <property type="term" value="C:cytoplasm"/>
    <property type="evidence" value="ECO:0007669"/>
    <property type="project" value="UniProtKB-SubCell"/>
</dbReference>
<dbReference type="GO" id="GO:0005634">
    <property type="term" value="C:nucleus"/>
    <property type="evidence" value="ECO:0007669"/>
    <property type="project" value="UniProtKB-SubCell"/>
</dbReference>
<dbReference type="GO" id="GO:0046523">
    <property type="term" value="F:S-methyl-5-thioribose-1-phosphate isomerase activity"/>
    <property type="evidence" value="ECO:0007669"/>
    <property type="project" value="UniProtKB-UniRule"/>
</dbReference>
<dbReference type="GO" id="GO:0019509">
    <property type="term" value="P:L-methionine salvage from methylthioadenosine"/>
    <property type="evidence" value="ECO:0007669"/>
    <property type="project" value="UniProtKB-UniRule"/>
</dbReference>
<dbReference type="FunFam" id="1.20.120.420:FF:000003">
    <property type="entry name" value="Methylthioribose-1-phosphate isomerase"/>
    <property type="match status" value="1"/>
</dbReference>
<dbReference type="FunFam" id="3.40.50.10470:FF:000003">
    <property type="entry name" value="Methylthioribose-1-phosphate isomerase"/>
    <property type="match status" value="1"/>
</dbReference>
<dbReference type="Gene3D" id="1.20.120.420">
    <property type="entry name" value="translation initiation factor eif-2b, domain 1"/>
    <property type="match status" value="1"/>
</dbReference>
<dbReference type="Gene3D" id="3.40.50.10470">
    <property type="entry name" value="Translation initiation factor eif-2b, domain 2"/>
    <property type="match status" value="1"/>
</dbReference>
<dbReference type="HAMAP" id="MF_01678">
    <property type="entry name" value="Salvage_MtnA"/>
    <property type="match status" value="1"/>
</dbReference>
<dbReference type="InterPro" id="IPR000649">
    <property type="entry name" value="IF-2B-related"/>
</dbReference>
<dbReference type="InterPro" id="IPR005251">
    <property type="entry name" value="IF-M1Pi"/>
</dbReference>
<dbReference type="InterPro" id="IPR042529">
    <property type="entry name" value="IF_2B-like_C"/>
</dbReference>
<dbReference type="InterPro" id="IPR011559">
    <property type="entry name" value="Initiation_fac_2B_a/b/d"/>
</dbReference>
<dbReference type="InterPro" id="IPR027363">
    <property type="entry name" value="M1Pi_N"/>
</dbReference>
<dbReference type="InterPro" id="IPR037171">
    <property type="entry name" value="NagB/RpiA_transferase-like"/>
</dbReference>
<dbReference type="NCBIfam" id="TIGR00524">
    <property type="entry name" value="eIF-2B_rel"/>
    <property type="match status" value="1"/>
</dbReference>
<dbReference type="NCBIfam" id="NF004326">
    <property type="entry name" value="PRK05720.1"/>
    <property type="match status" value="1"/>
</dbReference>
<dbReference type="NCBIfam" id="TIGR00512">
    <property type="entry name" value="salvage_mtnA"/>
    <property type="match status" value="1"/>
</dbReference>
<dbReference type="PANTHER" id="PTHR43475">
    <property type="entry name" value="METHYLTHIORIBOSE-1-PHOSPHATE ISOMERASE"/>
    <property type="match status" value="1"/>
</dbReference>
<dbReference type="PANTHER" id="PTHR43475:SF1">
    <property type="entry name" value="METHYLTHIORIBOSE-1-PHOSPHATE ISOMERASE"/>
    <property type="match status" value="1"/>
</dbReference>
<dbReference type="Pfam" id="PF01008">
    <property type="entry name" value="IF-2B"/>
    <property type="match status" value="1"/>
</dbReference>
<dbReference type="SUPFAM" id="SSF100950">
    <property type="entry name" value="NagB/RpiA/CoA transferase-like"/>
    <property type="match status" value="1"/>
</dbReference>
<feature type="chain" id="PRO_0000401994" description="Methylthioribose-1-phosphate isomerase">
    <location>
        <begin position="1"/>
        <end position="365"/>
    </location>
</feature>
<feature type="active site" description="Proton donor" evidence="1">
    <location>
        <position position="249"/>
    </location>
</feature>
<feature type="site" description="Transition state stabilizer" evidence="1">
    <location>
        <position position="169"/>
    </location>
</feature>
<comment type="function">
    <text evidence="1">Catalyzes the interconversion of methylthioribose-1-phosphate (MTR-1-P) into methylthioribulose-1-phosphate (MTRu-1-P).</text>
</comment>
<comment type="catalytic activity">
    <reaction evidence="1">
        <text>5-(methylsulfanyl)-alpha-D-ribose 1-phosphate = 5-(methylsulfanyl)-D-ribulose 1-phosphate</text>
        <dbReference type="Rhea" id="RHEA:19989"/>
        <dbReference type="ChEBI" id="CHEBI:58533"/>
        <dbReference type="ChEBI" id="CHEBI:58548"/>
        <dbReference type="EC" id="5.3.1.23"/>
    </reaction>
</comment>
<comment type="pathway">
    <text evidence="1">Amino-acid biosynthesis; L-methionine biosynthesis via salvage pathway; L-methionine from S-methyl-5-thio-alpha-D-ribose 1-phosphate: step 1/6.</text>
</comment>
<comment type="subcellular location">
    <subcellularLocation>
        <location evidence="1">Cytoplasm</location>
    </subcellularLocation>
    <subcellularLocation>
        <location evidence="1">Nucleus</location>
    </subcellularLocation>
</comment>
<comment type="similarity">
    <text evidence="1">Belongs to the eIF-2B alpha/beta/delta subunits family. MtnA subfamily.</text>
</comment>
<gene>
    <name type="ORF">OSTLU_35743</name>
</gene>
<organism>
    <name type="scientific">Ostreococcus lucimarinus (strain CCE9901)</name>
    <dbReference type="NCBI Taxonomy" id="436017"/>
    <lineage>
        <taxon>Eukaryota</taxon>
        <taxon>Viridiplantae</taxon>
        <taxon>Chlorophyta</taxon>
        <taxon>Mamiellophyceae</taxon>
        <taxon>Mamiellales</taxon>
        <taxon>Bathycoccaceae</taxon>
        <taxon>Ostreococcus</taxon>
    </lineage>
</organism>
<protein>
    <recommendedName>
        <fullName evidence="1">Methylthioribose-1-phosphate isomerase</fullName>
        <shortName evidence="1">M1Pi</shortName>
        <shortName evidence="1">MTR-1-P isomerase</shortName>
        <ecNumber evidence="1">5.3.1.23</ecNumber>
    </recommendedName>
    <alternativeName>
        <fullName evidence="1">S-methyl-5-thioribose-1-phosphate isomerase</fullName>
    </alternativeName>
    <alternativeName>
        <fullName evidence="1">Translation initiation factor eIF-2B subunit alpha/beta/delta-like protein</fullName>
    </alternativeName>
</protein>
<accession>A4S068</accession>